<accession>G2TRS1</accession>
<reference key="1">
    <citation type="journal article" date="2002" name="Nature">
        <title>The genome sequence of Schizosaccharomyces pombe.</title>
        <authorList>
            <person name="Wood V."/>
            <person name="Gwilliam R."/>
            <person name="Rajandream M.A."/>
            <person name="Lyne M.H."/>
            <person name="Lyne R."/>
            <person name="Stewart A."/>
            <person name="Sgouros J.G."/>
            <person name="Peat N."/>
            <person name="Hayles J."/>
            <person name="Baker S.G."/>
            <person name="Basham D."/>
            <person name="Bowman S."/>
            <person name="Brooks K."/>
            <person name="Brown D."/>
            <person name="Brown S."/>
            <person name="Chillingworth T."/>
            <person name="Churcher C.M."/>
            <person name="Collins M."/>
            <person name="Connor R."/>
            <person name="Cronin A."/>
            <person name="Davis P."/>
            <person name="Feltwell T."/>
            <person name="Fraser A."/>
            <person name="Gentles S."/>
            <person name="Goble A."/>
            <person name="Hamlin N."/>
            <person name="Harris D.E."/>
            <person name="Hidalgo J."/>
            <person name="Hodgson G."/>
            <person name="Holroyd S."/>
            <person name="Hornsby T."/>
            <person name="Howarth S."/>
            <person name="Huckle E.J."/>
            <person name="Hunt S."/>
            <person name="Jagels K."/>
            <person name="James K.D."/>
            <person name="Jones L."/>
            <person name="Jones M."/>
            <person name="Leather S."/>
            <person name="McDonald S."/>
            <person name="McLean J."/>
            <person name="Mooney P."/>
            <person name="Moule S."/>
            <person name="Mungall K.L."/>
            <person name="Murphy L.D."/>
            <person name="Niblett D."/>
            <person name="Odell C."/>
            <person name="Oliver K."/>
            <person name="O'Neil S."/>
            <person name="Pearson D."/>
            <person name="Quail M.A."/>
            <person name="Rabbinowitsch E."/>
            <person name="Rutherford K.M."/>
            <person name="Rutter S."/>
            <person name="Saunders D."/>
            <person name="Seeger K."/>
            <person name="Sharp S."/>
            <person name="Skelton J."/>
            <person name="Simmonds M.N."/>
            <person name="Squares R."/>
            <person name="Squares S."/>
            <person name="Stevens K."/>
            <person name="Taylor K."/>
            <person name="Taylor R.G."/>
            <person name="Tivey A."/>
            <person name="Walsh S.V."/>
            <person name="Warren T."/>
            <person name="Whitehead S."/>
            <person name="Woodward J.R."/>
            <person name="Volckaert G."/>
            <person name="Aert R."/>
            <person name="Robben J."/>
            <person name="Grymonprez B."/>
            <person name="Weltjens I."/>
            <person name="Vanstreels E."/>
            <person name="Rieger M."/>
            <person name="Schaefer M."/>
            <person name="Mueller-Auer S."/>
            <person name="Gabel C."/>
            <person name="Fuchs M."/>
            <person name="Duesterhoeft A."/>
            <person name="Fritzc C."/>
            <person name="Holzer E."/>
            <person name="Moestl D."/>
            <person name="Hilbert H."/>
            <person name="Borzym K."/>
            <person name="Langer I."/>
            <person name="Beck A."/>
            <person name="Lehrach H."/>
            <person name="Reinhardt R."/>
            <person name="Pohl T.M."/>
            <person name="Eger P."/>
            <person name="Zimmermann W."/>
            <person name="Wedler H."/>
            <person name="Wambutt R."/>
            <person name="Purnelle B."/>
            <person name="Goffeau A."/>
            <person name="Cadieu E."/>
            <person name="Dreano S."/>
            <person name="Gloux S."/>
            <person name="Lelaure V."/>
            <person name="Mottier S."/>
            <person name="Galibert F."/>
            <person name="Aves S.J."/>
            <person name="Xiang Z."/>
            <person name="Hunt C."/>
            <person name="Moore K."/>
            <person name="Hurst S.M."/>
            <person name="Lucas M."/>
            <person name="Rochet M."/>
            <person name="Gaillardin C."/>
            <person name="Tallada V.A."/>
            <person name="Garzon A."/>
            <person name="Thode G."/>
            <person name="Daga R.R."/>
            <person name="Cruzado L."/>
            <person name="Jimenez J."/>
            <person name="Sanchez M."/>
            <person name="del Rey F."/>
            <person name="Benito J."/>
            <person name="Dominguez A."/>
            <person name="Revuelta J.L."/>
            <person name="Moreno S."/>
            <person name="Armstrong J."/>
            <person name="Forsburg S.L."/>
            <person name="Cerutti L."/>
            <person name="Lowe T."/>
            <person name="McCombie W.R."/>
            <person name="Paulsen I."/>
            <person name="Potashkin J."/>
            <person name="Shpakovski G.V."/>
            <person name="Ussery D."/>
            <person name="Barrell B.G."/>
            <person name="Nurse P."/>
        </authorList>
    </citation>
    <scope>NUCLEOTIDE SEQUENCE [LARGE SCALE GENOMIC DNA]</scope>
    <source>
        <strain>972 / ATCC 24843</strain>
    </source>
</reference>
<reference key="2">
    <citation type="journal article" date="2011" name="Genetics">
        <title>Augmented annotation of the Schizosaccharomyces pombe genome reveals additional genes required for growth and viability.</title>
        <authorList>
            <person name="Bitton D.A."/>
            <person name="Wood V."/>
            <person name="Scutt P.J."/>
            <person name="Grallert A."/>
            <person name="Yates T."/>
            <person name="Smith D.L."/>
            <person name="Hagan I.M."/>
            <person name="Miller C.J."/>
        </authorList>
    </citation>
    <scope>IDENTIFICATION BY MASS SPECTROMETRY</scope>
</reference>
<keyword id="KW-1185">Reference proteome</keyword>
<protein>
    <recommendedName>
        <fullName>Uncharacterized protein new14</fullName>
    </recommendedName>
</protein>
<sequence length="80" mass="9400">MQKKEKIIENLEKAGNTFHLIIKCNTIARILKNLSTYAILLNSNILEEHVDLLLIYLSTQRMWKLNNLKKTLQYKGSKKK</sequence>
<organism>
    <name type="scientific">Schizosaccharomyces pombe (strain 972 / ATCC 24843)</name>
    <name type="common">Fission yeast</name>
    <dbReference type="NCBI Taxonomy" id="284812"/>
    <lineage>
        <taxon>Eukaryota</taxon>
        <taxon>Fungi</taxon>
        <taxon>Dikarya</taxon>
        <taxon>Ascomycota</taxon>
        <taxon>Taphrinomycotina</taxon>
        <taxon>Schizosaccharomycetes</taxon>
        <taxon>Schizosaccharomycetales</taxon>
        <taxon>Schizosaccharomycetaceae</taxon>
        <taxon>Schizosaccharomyces</taxon>
    </lineage>
</organism>
<proteinExistence type="evidence at protein level"/>
<name>NEW14_SCHPO</name>
<gene>
    <name type="primary">new14</name>
    <name type="ORF">SPBC839.20</name>
</gene>
<feature type="chain" id="PRO_0000416508" description="Uncharacterized protein new14">
    <location>
        <begin position="1"/>
        <end position="80"/>
    </location>
</feature>
<dbReference type="EMBL" id="CU329671">
    <property type="protein sequence ID" value="CCD31352.1"/>
    <property type="molecule type" value="Genomic_DNA"/>
</dbReference>
<dbReference type="RefSeq" id="XP_004001698.1">
    <property type="nucleotide sequence ID" value="XM_004001649.1"/>
</dbReference>
<dbReference type="STRING" id="284812.G2TRS1"/>
<dbReference type="PaxDb" id="4896-SPBC839.20.1"/>
<dbReference type="EnsemblFungi" id="SPBC839.20.1">
    <property type="protein sequence ID" value="SPBC839.20.1:pep"/>
    <property type="gene ID" value="SPBC839.20"/>
</dbReference>
<dbReference type="PomBase" id="SPBC839.20">
    <property type="gene designation" value="new14"/>
</dbReference>
<dbReference type="VEuPathDB" id="FungiDB:SPBC839.20"/>
<dbReference type="HOGENOM" id="CLU_2591158_0_0_1"/>
<dbReference type="InParanoid" id="G2TRS1"/>
<dbReference type="PRO" id="PR:G2TRS1"/>
<dbReference type="Proteomes" id="UP000002485">
    <property type="component" value="Chromosome II"/>
</dbReference>